<keyword id="KW-0025">Alternative splicing</keyword>
<keyword id="KW-0479">Metal-binding</keyword>
<keyword id="KW-0539">Nucleus</keyword>
<keyword id="KW-1267">Proteomics identification</keyword>
<keyword id="KW-1185">Reference proteome</keyword>
<keyword id="KW-0678">Repressor</keyword>
<keyword id="KW-0804">Transcription</keyword>
<keyword id="KW-0805">Transcription regulation</keyword>
<keyword id="KW-0833">Ubl conjugation pathway</keyword>
<keyword id="KW-0862">Zinc</keyword>
<keyword id="KW-0863">Zinc-finger</keyword>
<comment type="function">
    <text evidence="1 2 12 14">Putative Polycomb group (PcG) protein. PcG proteins act by forming multiprotein complexes, which are required to maintain the transcriptionally repressive state of homeotic genes throughout development. PcG proteins are not required to initiate repression, but to maintain it during later stages of development. They probably act via methylation of histones, rendering chromatin heritably changed in its expressibility (By similarity). Non-catalytic component of the PR-DUB complex, a complex that specifically mediates deubiquitination of histone H2A monoubiquitinated at 'Lys-119' (H2AK119ub1) (PubMed:30664650, PubMed:36180891). The PR-DUB complex is an epigenetic regulator of gene expression and acts as a transcriptional coactivator, affecting genes involved in development, cell communication, signaling, cell proliferation and cell viability (PubMed:30664650, PubMed:36180891). ASXL1, ASXL2 and ASXL3 function redundantly in the PR-DUB complex and are essential for chromatin recruitment and transcriptional activation of associated genes (By similarity).</text>
</comment>
<comment type="subunit">
    <text evidence="14 17 18">Core component of the polycomb repressive deubiquitinase (PR-DUB) complex, at least composed of BAP1, one of ASXL1, ASXL2 or (probably) ASXL3, and one of MBD5 or MBD6 (Probable). Distinct combinations of ASXL and MBD proteins may preferentially bind specific histone modification marks (PubMed:36180891). The PR-DUB core associates with a number of accessory proteins, including FOXK1, FOXK2, KDM1B, HCFC1 and OGT; KDM1B specifically associates with ASXL2 PR-DUB complexes (Probable). Interacts (via PHD domain) with MBD5 and MBD6 (via MBD domain); the interaction is probably direct and mediates association of MBD proteins with the PR-DUB core (PubMed:36180891).</text>
</comment>
<comment type="subcellular location">
    <subcellularLocation>
        <location evidence="16">Nucleus</location>
    </subcellularLocation>
</comment>
<comment type="alternative products">
    <event type="alternative splicing"/>
    <isoform>
        <id>Q9C0F0-1</id>
        <name>1</name>
        <sequence type="displayed"/>
    </isoform>
    <isoform>
        <id>Q9C0F0-2</id>
        <name>2</name>
        <sequence type="described" ref="VSP_042433 VSP_042434"/>
    </isoform>
</comment>
<comment type="tissue specificity">
    <text evidence="8">Expressed in pancreatic islets, testis, neuroblastoma, head and neck tumor.</text>
</comment>
<comment type="developmental stage">
    <text evidence="13">Expressed in trophoblast stem cells during placental development and down-regulated during trophoblast differentiation.</text>
</comment>
<comment type="disease" evidence="10">
    <disease id="DI-03920">
        <name>Bainbridge-Ropers syndrome</name>
        <acronym>BRPS</acronym>
        <description>A syndrome characterized by psychomotor retardation, feeding problems, severe postnatal growth retardation in some patients, arched eyebrows, anteverted nares, and ulnar deviation of the hands.</description>
        <dbReference type="MIM" id="615485"/>
    </disease>
    <text>The disease is caused by variants affecting the gene represented in this entry.</text>
</comment>
<comment type="miscellaneous">
    <molecule>Isoform 2</molecule>
    <text evidence="16">May be produced at very low levels due to a premature stop codon in the mRNA, leading to nonsense-mediated mRNA decay.</text>
</comment>
<comment type="similarity">
    <text evidence="16">Belongs to the Asx family.</text>
</comment>
<comment type="sequence caution" evidence="16">
    <conflict type="erroneous initiation">
        <sequence resource="EMBL-CDS" id="BAB71186"/>
    </conflict>
    <text>Truncated N-terminus.</text>
</comment>
<comment type="sequence caution" evidence="16">
    <conflict type="erroneous translation">
        <sequence resource="EMBL-CDS" id="BAD18599"/>
    </conflict>
    <text>Wrong choice of CDS.</text>
</comment>
<comment type="sequence caution" evidence="16">
    <conflict type="miscellaneous discrepancy">
        <sequence resource="EMBL-CDS" id="CAB61377"/>
    </conflict>
    <text>Contaminating sequence. Potential poly-A sequence.</text>
</comment>
<accession>Q9C0F0</accession>
<accession>Q6ZMX6</accession>
<accession>Q96MU3</accession>
<accession>Q9UFC5</accession>
<reference key="1">
    <citation type="journal article" date="2005" name="Nature">
        <title>DNA sequence and analysis of human chromosome 18.</title>
        <authorList>
            <person name="Nusbaum C."/>
            <person name="Zody M.C."/>
            <person name="Borowsky M.L."/>
            <person name="Kamal M."/>
            <person name="Kodira C.D."/>
            <person name="Taylor T.D."/>
            <person name="Whittaker C.A."/>
            <person name="Chang J.L."/>
            <person name="Cuomo C.A."/>
            <person name="Dewar K."/>
            <person name="FitzGerald M.G."/>
            <person name="Yang X."/>
            <person name="Abouelleil A."/>
            <person name="Allen N.R."/>
            <person name="Anderson S."/>
            <person name="Bloom T."/>
            <person name="Bugalter B."/>
            <person name="Butler J."/>
            <person name="Cook A."/>
            <person name="DeCaprio D."/>
            <person name="Engels R."/>
            <person name="Garber M."/>
            <person name="Gnirke A."/>
            <person name="Hafez N."/>
            <person name="Hall J.L."/>
            <person name="Norman C.H."/>
            <person name="Itoh T."/>
            <person name="Jaffe D.B."/>
            <person name="Kuroki Y."/>
            <person name="Lehoczky J."/>
            <person name="Lui A."/>
            <person name="Macdonald P."/>
            <person name="Mauceli E."/>
            <person name="Mikkelsen T.S."/>
            <person name="Naylor J.W."/>
            <person name="Nicol R."/>
            <person name="Nguyen C."/>
            <person name="Noguchi H."/>
            <person name="O'Leary S.B."/>
            <person name="Piqani B."/>
            <person name="Smith C.L."/>
            <person name="Talamas J.A."/>
            <person name="Topham K."/>
            <person name="Totoki Y."/>
            <person name="Toyoda A."/>
            <person name="Wain H.M."/>
            <person name="Young S.K."/>
            <person name="Zeng Q."/>
            <person name="Zimmer A.R."/>
            <person name="Fujiyama A."/>
            <person name="Hattori M."/>
            <person name="Birren B.W."/>
            <person name="Sakaki Y."/>
            <person name="Lander E.S."/>
        </authorList>
    </citation>
    <scope>NUCLEOTIDE SEQUENCE [LARGE SCALE GENOMIC DNA]</scope>
</reference>
<reference key="2">
    <citation type="journal article" date="2004" name="Nat. Genet.">
        <title>Complete sequencing and characterization of 21,243 full-length human cDNAs.</title>
        <authorList>
            <person name="Ota T."/>
            <person name="Suzuki Y."/>
            <person name="Nishikawa T."/>
            <person name="Otsuki T."/>
            <person name="Sugiyama T."/>
            <person name="Irie R."/>
            <person name="Wakamatsu A."/>
            <person name="Hayashi K."/>
            <person name="Sato H."/>
            <person name="Nagai K."/>
            <person name="Kimura K."/>
            <person name="Makita H."/>
            <person name="Sekine M."/>
            <person name="Obayashi M."/>
            <person name="Nishi T."/>
            <person name="Shibahara T."/>
            <person name="Tanaka T."/>
            <person name="Ishii S."/>
            <person name="Yamamoto J."/>
            <person name="Saito K."/>
            <person name="Kawai Y."/>
            <person name="Isono Y."/>
            <person name="Nakamura Y."/>
            <person name="Nagahari K."/>
            <person name="Murakami K."/>
            <person name="Yasuda T."/>
            <person name="Iwayanagi T."/>
            <person name="Wagatsuma M."/>
            <person name="Shiratori A."/>
            <person name="Sudo H."/>
            <person name="Hosoiri T."/>
            <person name="Kaku Y."/>
            <person name="Kodaira H."/>
            <person name="Kondo H."/>
            <person name="Sugawara M."/>
            <person name="Takahashi M."/>
            <person name="Kanda K."/>
            <person name="Yokoi T."/>
            <person name="Furuya T."/>
            <person name="Kikkawa E."/>
            <person name="Omura Y."/>
            <person name="Abe K."/>
            <person name="Kamihara K."/>
            <person name="Katsuta N."/>
            <person name="Sato K."/>
            <person name="Tanikawa M."/>
            <person name="Yamazaki M."/>
            <person name="Ninomiya K."/>
            <person name="Ishibashi T."/>
            <person name="Yamashita H."/>
            <person name="Murakawa K."/>
            <person name="Fujimori K."/>
            <person name="Tanai H."/>
            <person name="Kimata M."/>
            <person name="Watanabe M."/>
            <person name="Hiraoka S."/>
            <person name="Chiba Y."/>
            <person name="Ishida S."/>
            <person name="Ono Y."/>
            <person name="Takiguchi S."/>
            <person name="Watanabe S."/>
            <person name="Yosida M."/>
            <person name="Hotuta T."/>
            <person name="Kusano J."/>
            <person name="Kanehori K."/>
            <person name="Takahashi-Fujii A."/>
            <person name="Hara H."/>
            <person name="Tanase T.-O."/>
            <person name="Nomura Y."/>
            <person name="Togiya S."/>
            <person name="Komai F."/>
            <person name="Hara R."/>
            <person name="Takeuchi K."/>
            <person name="Arita M."/>
            <person name="Imose N."/>
            <person name="Musashino K."/>
            <person name="Yuuki H."/>
            <person name="Oshima A."/>
            <person name="Sasaki N."/>
            <person name="Aotsuka S."/>
            <person name="Yoshikawa Y."/>
            <person name="Matsunawa H."/>
            <person name="Ichihara T."/>
            <person name="Shiohata N."/>
            <person name="Sano S."/>
            <person name="Moriya S."/>
            <person name="Momiyama H."/>
            <person name="Satoh N."/>
            <person name="Takami S."/>
            <person name="Terashima Y."/>
            <person name="Suzuki O."/>
            <person name="Nakagawa S."/>
            <person name="Senoh A."/>
            <person name="Mizoguchi H."/>
            <person name="Goto Y."/>
            <person name="Shimizu F."/>
            <person name="Wakebe H."/>
            <person name="Hishigaki H."/>
            <person name="Watanabe T."/>
            <person name="Sugiyama A."/>
            <person name="Takemoto M."/>
            <person name="Kawakami B."/>
            <person name="Yamazaki M."/>
            <person name="Watanabe K."/>
            <person name="Kumagai A."/>
            <person name="Itakura S."/>
            <person name="Fukuzumi Y."/>
            <person name="Fujimori Y."/>
            <person name="Komiyama M."/>
            <person name="Tashiro H."/>
            <person name="Tanigami A."/>
            <person name="Fujiwara T."/>
            <person name="Ono T."/>
            <person name="Yamada K."/>
            <person name="Fujii Y."/>
            <person name="Ozaki K."/>
            <person name="Hirao M."/>
            <person name="Ohmori Y."/>
            <person name="Kawabata A."/>
            <person name="Hikiji T."/>
            <person name="Kobatake N."/>
            <person name="Inagaki H."/>
            <person name="Ikema Y."/>
            <person name="Okamoto S."/>
            <person name="Okitani R."/>
            <person name="Kawakami T."/>
            <person name="Noguchi S."/>
            <person name="Itoh T."/>
            <person name="Shigeta K."/>
            <person name="Senba T."/>
            <person name="Matsumura K."/>
            <person name="Nakajima Y."/>
            <person name="Mizuno T."/>
            <person name="Morinaga M."/>
            <person name="Sasaki M."/>
            <person name="Togashi T."/>
            <person name="Oyama M."/>
            <person name="Hata H."/>
            <person name="Watanabe M."/>
            <person name="Komatsu T."/>
            <person name="Mizushima-Sugano J."/>
            <person name="Satoh T."/>
            <person name="Shirai Y."/>
            <person name="Takahashi Y."/>
            <person name="Nakagawa K."/>
            <person name="Okumura K."/>
            <person name="Nagase T."/>
            <person name="Nomura N."/>
            <person name="Kikuchi H."/>
            <person name="Masuho Y."/>
            <person name="Yamashita R."/>
            <person name="Nakai K."/>
            <person name="Yada T."/>
            <person name="Nakamura Y."/>
            <person name="Ohara O."/>
            <person name="Isogai T."/>
            <person name="Sugano S."/>
        </authorList>
    </citation>
    <scope>NUCLEOTIDE SEQUENCE [LARGE SCALE MRNA] (ISOFORM 2)</scope>
    <scope>NUCLEOTIDE SEQUENCE [LARGE SCALE MRNA] OF 1632-2248 (ISOFORM 1)</scope>
    <scope>VARIANT VAL-1708</scope>
    <source>
        <tissue>Testis</tissue>
    </source>
</reference>
<reference key="3">
    <citation type="journal article" date="2000" name="DNA Res.">
        <title>Prediction of the coding sequences of unidentified human genes. XIX. The complete sequences of 100 new cDNA clones from brain which code for large proteins in vitro.</title>
        <authorList>
            <person name="Nagase T."/>
            <person name="Kikuno R."/>
            <person name="Hattori A."/>
            <person name="Kondo Y."/>
            <person name="Okumura K."/>
            <person name="Ohara O."/>
        </authorList>
    </citation>
    <scope>NUCLEOTIDE SEQUENCE [LARGE SCALE MRNA] OF 597-2248</scope>
    <scope>VARIANTS SER-954 AND VAL-1708</scope>
    <source>
        <tissue>Brain</tissue>
    </source>
</reference>
<reference key="4">
    <citation type="journal article" date="2002" name="DNA Res.">
        <title>Construction of expression-ready cDNA clones for KIAA genes: manual curation of 330 KIAA cDNA clones.</title>
        <authorList>
            <person name="Nakajima D."/>
            <person name="Okazaki N."/>
            <person name="Yamakawa H."/>
            <person name="Kikuno R."/>
            <person name="Ohara O."/>
            <person name="Nagase T."/>
        </authorList>
    </citation>
    <scope>SEQUENCE REVISION</scope>
</reference>
<reference key="5">
    <citation type="journal article" date="2007" name="BMC Genomics">
        <title>The full-ORF clone resource of the German cDNA consortium.</title>
        <authorList>
            <person name="Bechtel S."/>
            <person name="Rosenfelder H."/>
            <person name="Duda A."/>
            <person name="Schmidt C.P."/>
            <person name="Ernst U."/>
            <person name="Wellenreuther R."/>
            <person name="Mehrle A."/>
            <person name="Schuster C."/>
            <person name="Bahr A."/>
            <person name="Bloecker H."/>
            <person name="Heubner D."/>
            <person name="Hoerlein A."/>
            <person name="Michel G."/>
            <person name="Wedler H."/>
            <person name="Koehrer K."/>
            <person name="Ottenwaelder B."/>
            <person name="Poustka A."/>
            <person name="Wiemann S."/>
            <person name="Schupp I."/>
        </authorList>
    </citation>
    <scope>NUCLEOTIDE SEQUENCE [LARGE SCALE MRNA] OF 818-1238 (ISOFORM 1)</scope>
    <scope>VARIANT SER-954</scope>
    <source>
        <tissue>Testis</tissue>
    </source>
</reference>
<reference key="6">
    <citation type="journal article" date="2004" name="Int. J. Oncol.">
        <title>Identification and characterization of ASXL3 gene in silico.</title>
        <authorList>
            <person name="Katoh M."/>
            <person name="Katoh M."/>
        </authorList>
    </citation>
    <scope>IDENTIFICATION</scope>
    <scope>TISSUE SPECIFICITY</scope>
</reference>
<reference key="7">
    <citation type="journal article" date="2019" name="Nat. Commun.">
        <title>BAP1 complex promotes transcription by opposing PRC1-mediated H2A ubiquitylation.</title>
        <authorList>
            <person name="Campagne A."/>
            <person name="Lee M.K."/>
            <person name="Zielinski D."/>
            <person name="Michaud A."/>
            <person name="Le Corre S."/>
            <person name="Dingli F."/>
            <person name="Chen H."/>
            <person name="Shahidian L.Z."/>
            <person name="Vassilev I."/>
            <person name="Servant N."/>
            <person name="Loew D."/>
            <person name="Pasmant E."/>
            <person name="Postel-Vinay S."/>
            <person name="Wassef M."/>
            <person name="Margueron R."/>
        </authorList>
    </citation>
    <scope>FUNCTION</scope>
    <scope>SUBUNIT</scope>
</reference>
<reference key="8">
    <citation type="journal article" date="2021" name="Elife">
        <title>BAP1/ASXL complex modulation regulates epithelial-mesenchymal transition during trophoblast differentiation and invasion.</title>
        <authorList>
            <person name="Perez-Garcia V."/>
            <person name="Lea G."/>
            <person name="Lopez-Jimenez P."/>
            <person name="Okkenhaug H."/>
            <person name="Burton G.J."/>
            <person name="Moffett A."/>
            <person name="Turco M.Y."/>
            <person name="Hemberger M."/>
        </authorList>
    </citation>
    <scope>DEVELOPMENTAL STAGE</scope>
</reference>
<reference key="9">
    <citation type="journal article" date="2022" name="Genome Biol.">
        <title>MBD5 and MBD6 stabilize the BAP1 complex and promote BAP1-dependent cancer.</title>
        <authorList>
            <person name="Tsuboyama N."/>
            <person name="Szczepanski A.P."/>
            <person name="Zhao Z."/>
            <person name="Wang L."/>
        </authorList>
    </citation>
    <scope>FUNCTION</scope>
    <scope>INTERACTION WITH MBD5 AND MBD6</scope>
</reference>
<reference key="10">
    <citation type="journal article" date="2013" name="Genome Med.">
        <title>De novo truncating mutations in ASXL3 are associated with a novel clinical phenotype with similarities to Bohring-Opitz syndrome.</title>
        <authorList>
            <person name="Bainbridge M.N."/>
            <person name="Hu H."/>
            <person name="Muzny D.M."/>
            <person name="Musante L."/>
            <person name="Lupski J.R."/>
            <person name="Graham B.H."/>
            <person name="Chen W."/>
            <person name="Gripp K.W."/>
            <person name="Jenny K."/>
            <person name="Wienker T.F."/>
            <person name="Yang Y."/>
            <person name="Sutton V.R."/>
            <person name="Gibbs R.A."/>
            <person name="Ropers H.H."/>
        </authorList>
    </citation>
    <scope>INVOLVEMENT IN BRPS</scope>
</reference>
<reference key="11">
    <citation type="journal article" date="2019" name="Genet. Med.">
        <title>Clinical exome sequencing reveals locus heterogeneity and phenotypic variability of cohesinopathies.</title>
        <authorList>
            <consortium name="DDD Study"/>
            <person name="Yuan B."/>
            <person name="Neira J."/>
            <person name="Pehlivan D."/>
            <person name="Santiago-Sim T."/>
            <person name="Song X."/>
            <person name="Rosenfeld J."/>
            <person name="Posey J.E."/>
            <person name="Patel V."/>
            <person name="Jin W."/>
            <person name="Adam M.P."/>
            <person name="Baple E.L."/>
            <person name="Dean J."/>
            <person name="Fong C.T."/>
            <person name="Hickey S.E."/>
            <person name="Hudgins L."/>
            <person name="Leon E."/>
            <person name="Madan-Khetarpal S."/>
            <person name="Rawlins L."/>
            <person name="Rustad C.F."/>
            <person name="Stray-Pedersen A."/>
            <person name="Tveten K."/>
            <person name="Wenger O."/>
            <person name="Diaz J."/>
            <person name="Jenkins L."/>
            <person name="Martin L."/>
            <person name="McGuire M."/>
            <person name="Pietryga M."/>
            <person name="Ramsdell L."/>
            <person name="Slattery L."/>
            <person name="Abid F."/>
            <person name="Bertuch A.A."/>
            <person name="Grange D."/>
            <person name="Immken L."/>
            <person name="Schaaf C.P."/>
            <person name="Van Esch H."/>
            <person name="Bi W."/>
            <person name="Cheung S.W."/>
            <person name="Breman A.M."/>
            <person name="Smith J.L."/>
            <person name="Shaw C."/>
            <person name="Crosby A.H."/>
            <person name="Eng C."/>
            <person name="Yang Y."/>
            <person name="Lupski J.R."/>
            <person name="Xiao R."/>
            <person name="Liu P."/>
        </authorList>
    </citation>
    <scope>VARIANT 1109-LYS--ARG-2248 DEL</scope>
</reference>
<protein>
    <recommendedName>
        <fullName>Putative Polycomb group protein ASXL3</fullName>
    </recommendedName>
    <alternativeName>
        <fullName>Additional sex combs-like protein 3</fullName>
    </alternativeName>
</protein>
<sequence>MKDKRKKKDRTWAEAARLALEKHPNSPMTAKQILEVIQKEGLKETSGTSPLACLNAMLHTNTRIGDGTFFKIPGKSGLYALKKEESSCPADGTLDLVCESELDGTDMAEANAHGEENGVCSKQVTDEASSTRDSSLTNTAVQSKLVSSFQQHTKKALKQALRQQQKRRNGVSMMVNKTVPRVVLTPLKVSDEQSDSPSGSESKNGEADSSDKEMKHGQKSPTGKQTSQHLKRLKKSGLGHLKWTKAEDIDIETPGSILVNTNLRALINKHTFASLPQHFQQYLLLLLPEVDRQMGSDGILRLSTSALNNEFFAYAAQGWKQRLAEGEFTPEMQLRIRQEIEKEKKTEPWKEKFFERFYGEKLGMSREESVKLTTGPNNAGAQSSSSCGTSGLPVSAQTALAEQQPKSMKSPASPEPGFCATLCPMVEIPPKDIMAELESEDILIPEESVIQEEIAEEVETSICECQDENHKTIPEFSEEAESLTNSHEEPQIAPPEDNLESCVMMNDVLETLPHIEVKIEGKSESPQEEMTVVIDQLEVCDSLIPSTSSMTHVSDTEHKESETAVETSTPKIKTGSSSLEGQFPNEGIAIDMELQSDPEEQLSENACISETSFSSESPEGACTSLPSPGGETQSTSEESCTPASLETTFCSEVSSTENTDKYNQRNSTDENFHASLMSEISPISTSPEISEASLMSNLPLTSEASPVSNLPLTSETSPMSDLPLTSETSSVSSMLLTSETTFVSSLPLPSETSPISNSSINERMAHQQRKSPSVSEEPLSPQKDESSATAKPLGENLTSQQKNLSNTPEPIIMSSSSIAPEAFPSEDLHNKTLSQQTCKSHVDTEKPYPASIPELASTEMIKVKNHSVLQRTEKKVLPSPLELSVFSEGTDNKGNELPSAKLQDKQYISSVDKAPFSEGSRNKTHKQGSTQSRLETSHTSKSSEPSKSPDGIRNESRDSEISKRKTAEQHSFGICKEKRARIEDDQSTRNISSSSPPEKEQPPREEPRVPPLKIQLSKIGPPFIIKSQPVSKPESRASTSTSVSGGRNTGARTLADIKARAQQARAQREAAAAAAVAAAASIVSGAMGSPGEGGKTRTLAHIKEQTKAKLFAKHQARAHLFQTSKETRLPPPLSSKEGPPNLEVSSTPETKMEGSTGVIIVNPNCRSPSNKSAHLRETTTVLQQSLNPSKLPETATDLSVHSSDENIPVSHLSEKIVSSTSSENSSVPMLFNKNSVPVSVCSTAISGAIKEHPFVSSVDKSSVLMSVDSANTTISACNISMLKTIQGTDTPCIAIIPKCIESTPISATTEGSSISSSMDDKQLLISSSSASNLVSTQYTSVPTPSIGNNLPNLSTSSVLIPPMGINNRFPSEKIAIPGSEEQATVSMGTTVRAALSCSDSVAVTDSLVAHPTVAMFTGNMLTINSYDSPPKLSAESLDKNSGPRNRADNSGKPQQPPGGFAPAAINRSIPCKVIVDHSTTLTSSLSLTVSVESSEASLDLQGRPVRTEASVQPVACPQVSVISRPEPVANEGIDHSSTFIAASAAKQDSKTLPATCTSLRELPLVPDKLNEPTAPSHNFAEQARGPAPFKSEADTTCSNQYNPSNRICWNDDGMRSTGQPLVTHSGSSKQKEYLEQSCPKAIKTEHANYLNVSELHPRNLVTNVALPVKSELHEADKGFRMDTEDFPGPELPPPAAEGASSVQQTQNMKASTSSPMEEAISLATDALKRVPGAGSSGCRLSSVEANNPLVTQLLQGNLPLEKVLPQPRLGAKLEINRLPLPLQTTSVGKTAPERNVEIPPSSPNPDGKGYLAGTLAPLQMRKRENHPKKRVARTVGEHTQVKCEPGKLLVEPDVKGVPCVISSGISQLGHSQPFKQEWLNKHSMQNRIVHSPEVKQQKRLLPSCSFQQNLFHVDKNGGFHTDAGTSHRQQFYQMPVAARGPIPTAALLQASSKTPVGCNAFAFNRHLEQKGLGEVSLSSAPHQLRLANMLSPNMPMKEGDEVGGTAHTMPNKALVHPPPPPPPPPPPPLALPPPPPPPPPLPPPLPNAEVPSDQKQPPVTMETTKRLSWPQSTGICSNIKSEPLSFEEGLSSSCELGMKQVSYDQNEMKEQLKAFALKSADFSSYLLSEPQKPFTQLAAQKMQVQQQQQLCGNYPTIHFGSTSFKRAASAIEKSIGILGSGSNPATGLSGQNAQMPVQNFADSSNADELELKCSCRLKAMIVCKGCGAFCHDDCIGPSKLCVACLVVR</sequence>
<feature type="chain" id="PRO_0000320670" description="Putative Polycomb group protein ASXL3">
    <location>
        <begin position="1"/>
        <end position="2248"/>
    </location>
</feature>
<feature type="domain" description="HTH HARE-type" evidence="3">
    <location>
        <begin position="10"/>
        <end position="84"/>
    </location>
</feature>
<feature type="domain" description="DEUBAD" evidence="4">
    <location>
        <begin position="254"/>
        <end position="363"/>
    </location>
</feature>
<feature type="zinc finger region" description="PHD-type; atypical">
    <location>
        <begin position="2210"/>
        <end position="2247"/>
    </location>
</feature>
<feature type="region of interest" description="Disordered" evidence="5">
    <location>
        <begin position="156"/>
        <end position="232"/>
    </location>
</feature>
<feature type="region of interest" description="Disordered" evidence="5">
    <location>
        <begin position="368"/>
        <end position="414"/>
    </location>
</feature>
<feature type="region of interest" description="Disordered" evidence="5">
    <location>
        <begin position="547"/>
        <end position="583"/>
    </location>
</feature>
<feature type="region of interest" description="Disordered" evidence="5">
    <location>
        <begin position="607"/>
        <end position="643"/>
    </location>
</feature>
<feature type="region of interest" description="Disordered" evidence="5">
    <location>
        <begin position="703"/>
        <end position="726"/>
    </location>
</feature>
<feature type="region of interest" description="Disordered" evidence="5">
    <location>
        <begin position="762"/>
        <end position="853"/>
    </location>
</feature>
<feature type="region of interest" description="Disordered" evidence="5">
    <location>
        <begin position="869"/>
        <end position="1052"/>
    </location>
</feature>
<feature type="region of interest" description="Disordered" evidence="5">
    <location>
        <begin position="1123"/>
        <end position="1152"/>
    </location>
</feature>
<feature type="region of interest" description="Disordered" evidence="5">
    <location>
        <begin position="1183"/>
        <end position="1203"/>
    </location>
</feature>
<feature type="region of interest" description="Disordered" evidence="5">
    <location>
        <begin position="1431"/>
        <end position="1462"/>
    </location>
</feature>
<feature type="region of interest" description="Disordered" evidence="5">
    <location>
        <begin position="1573"/>
        <end position="1596"/>
    </location>
</feature>
<feature type="region of interest" description="Disordered" evidence="5">
    <location>
        <begin position="1990"/>
        <end position="2068"/>
    </location>
</feature>
<feature type="compositionally biased region" description="Basic and acidic residues" evidence="5">
    <location>
        <begin position="203"/>
        <end position="216"/>
    </location>
</feature>
<feature type="compositionally biased region" description="Polar residues" evidence="5">
    <location>
        <begin position="219"/>
        <end position="228"/>
    </location>
</feature>
<feature type="compositionally biased region" description="Polar residues" evidence="5">
    <location>
        <begin position="371"/>
        <end position="389"/>
    </location>
</feature>
<feature type="compositionally biased region" description="Polar residues" evidence="5">
    <location>
        <begin position="395"/>
        <end position="407"/>
    </location>
</feature>
<feature type="compositionally biased region" description="Polar residues" evidence="5">
    <location>
        <begin position="564"/>
        <end position="580"/>
    </location>
</feature>
<feature type="compositionally biased region" description="Polar residues" evidence="5">
    <location>
        <begin position="607"/>
        <end position="617"/>
    </location>
</feature>
<feature type="compositionally biased region" description="Polar residues" evidence="5">
    <location>
        <begin position="624"/>
        <end position="643"/>
    </location>
</feature>
<feature type="compositionally biased region" description="Polar residues" evidence="5">
    <location>
        <begin position="796"/>
        <end position="818"/>
    </location>
</feature>
<feature type="compositionally biased region" description="Low complexity" evidence="5">
    <location>
        <begin position="937"/>
        <end position="949"/>
    </location>
</feature>
<feature type="compositionally biased region" description="Basic and acidic residues" evidence="5">
    <location>
        <begin position="950"/>
        <end position="968"/>
    </location>
</feature>
<feature type="compositionally biased region" description="Basic and acidic residues" evidence="5">
    <location>
        <begin position="975"/>
        <end position="987"/>
    </location>
</feature>
<feature type="compositionally biased region" description="Basic and acidic residues" evidence="5">
    <location>
        <begin position="997"/>
        <end position="1008"/>
    </location>
</feature>
<feature type="compositionally biased region" description="Polar residues" evidence="5">
    <location>
        <begin position="1036"/>
        <end position="1046"/>
    </location>
</feature>
<feature type="compositionally biased region" description="Pro residues" evidence="5">
    <location>
        <begin position="2016"/>
        <end position="2046"/>
    </location>
</feature>
<feature type="splice variant" id="VSP_042433" description="In isoform 2." evidence="15">
    <original>MGSDGILRLSTSALNNEFFAYAAQ</original>
    <variation>SRNEPFLQEAMVPISGGCHEIKMS</variation>
    <location>
        <begin position="294"/>
        <end position="317"/>
    </location>
</feature>
<feature type="splice variant" id="VSP_042434" description="In isoform 2." evidence="15">
    <location>
        <begin position="318"/>
        <end position="2248"/>
    </location>
</feature>
<feature type="sequence variant" id="VAR_039267" description="In dbSNP:rs2282632." evidence="6 9">
    <original>N</original>
    <variation>S</variation>
    <location>
        <position position="954"/>
    </location>
</feature>
<feature type="sequence variant" id="VAR_082310" description="Found in a patient with cohesinopathy; uncertain significance." evidence="11">
    <location>
        <begin position="1109"/>
        <end position="2248"/>
    </location>
</feature>
<feature type="sequence variant" id="VAR_039268" description="In dbSNP:rs16964887.">
    <original>M</original>
    <variation>R</variation>
    <location>
        <position position="1415"/>
    </location>
</feature>
<feature type="sequence variant" id="VAR_039269" description="In dbSNP:rs17746949.">
    <original>V</original>
    <variation>M</variation>
    <location>
        <position position="1652"/>
    </location>
</feature>
<feature type="sequence variant" id="VAR_039270" description="In dbSNP:rs7232237." evidence="6 7">
    <original>M</original>
    <variation>V</variation>
    <location>
        <position position="1708"/>
    </location>
</feature>
<feature type="sequence conflict" description="In Ref. 2; BAD18599." evidence="16" ref="2">
    <original>S</original>
    <variation>RN</variation>
    <location>
        <position position="46"/>
    </location>
</feature>
<feature type="sequence conflict" description="In Ref. 2; BAD18599." evidence="16" ref="2">
    <original>S</original>
    <variation>P</variation>
    <location>
        <position position="49"/>
    </location>
</feature>
<feature type="sequence conflict" description="In Ref. 5; CAB61377." evidence="16" ref="5">
    <original>A</original>
    <variation>V</variation>
    <location>
        <position position="1079"/>
    </location>
</feature>
<feature type="sequence conflict" description="In Ref. 2; BAB71186." evidence="16" ref="2">
    <original>E</original>
    <variation>K</variation>
    <location>
        <position position="1632"/>
    </location>
</feature>
<proteinExistence type="evidence at protein level"/>
<gene>
    <name type="primary">ASXL3</name>
    <name type="synonym">KIAA1713</name>
</gene>
<name>ASXL3_HUMAN</name>
<evidence type="ECO:0000250" key="1"/>
<evidence type="ECO:0000250" key="2">
    <source>
        <dbReference type="UniProtKB" id="Q8C4A5"/>
    </source>
</evidence>
<evidence type="ECO:0000255" key="3">
    <source>
        <dbReference type="PROSITE-ProRule" id="PRU01261"/>
    </source>
</evidence>
<evidence type="ECO:0000255" key="4">
    <source>
        <dbReference type="PROSITE-ProRule" id="PRU01264"/>
    </source>
</evidence>
<evidence type="ECO:0000256" key="5">
    <source>
        <dbReference type="SAM" id="MobiDB-lite"/>
    </source>
</evidence>
<evidence type="ECO:0000269" key="6">
    <source>
    </source>
</evidence>
<evidence type="ECO:0000269" key="7">
    <source>
    </source>
</evidence>
<evidence type="ECO:0000269" key="8">
    <source>
    </source>
</evidence>
<evidence type="ECO:0000269" key="9">
    <source>
    </source>
</evidence>
<evidence type="ECO:0000269" key="10">
    <source>
    </source>
</evidence>
<evidence type="ECO:0000269" key="11">
    <source>
    </source>
</evidence>
<evidence type="ECO:0000269" key="12">
    <source>
    </source>
</evidence>
<evidence type="ECO:0000269" key="13">
    <source>
    </source>
</evidence>
<evidence type="ECO:0000269" key="14">
    <source>
    </source>
</evidence>
<evidence type="ECO:0000303" key="15">
    <source>
    </source>
</evidence>
<evidence type="ECO:0000305" key="16"/>
<evidence type="ECO:0000305" key="17">
    <source>
    </source>
</evidence>
<evidence type="ECO:0000305" key="18">
    <source>
    </source>
</evidence>
<organism>
    <name type="scientific">Homo sapiens</name>
    <name type="common">Human</name>
    <dbReference type="NCBI Taxonomy" id="9606"/>
    <lineage>
        <taxon>Eukaryota</taxon>
        <taxon>Metazoa</taxon>
        <taxon>Chordata</taxon>
        <taxon>Craniata</taxon>
        <taxon>Vertebrata</taxon>
        <taxon>Euteleostomi</taxon>
        <taxon>Mammalia</taxon>
        <taxon>Eutheria</taxon>
        <taxon>Euarchontoglires</taxon>
        <taxon>Primates</taxon>
        <taxon>Haplorrhini</taxon>
        <taxon>Catarrhini</taxon>
        <taxon>Hominidae</taxon>
        <taxon>Homo</taxon>
    </lineage>
</organism>
<dbReference type="EMBL" id="AC023192">
    <property type="status" value="NOT_ANNOTATED_CDS"/>
    <property type="molecule type" value="Genomic_DNA"/>
</dbReference>
<dbReference type="EMBL" id="AC090989">
    <property type="status" value="NOT_ANNOTATED_CDS"/>
    <property type="molecule type" value="Genomic_DNA"/>
</dbReference>
<dbReference type="EMBL" id="AC010798">
    <property type="status" value="NOT_ANNOTATED_CDS"/>
    <property type="molecule type" value="Genomic_DNA"/>
</dbReference>
<dbReference type="EMBL" id="AK056450">
    <property type="protein sequence ID" value="BAB71186.1"/>
    <property type="status" value="ALT_INIT"/>
    <property type="molecule type" value="mRNA"/>
</dbReference>
<dbReference type="EMBL" id="AK131454">
    <property type="protein sequence ID" value="BAD18599.1"/>
    <property type="status" value="ALT_SEQ"/>
    <property type="molecule type" value="mRNA"/>
</dbReference>
<dbReference type="EMBL" id="AB051500">
    <property type="protein sequence ID" value="BAB21804.2"/>
    <property type="molecule type" value="mRNA"/>
</dbReference>
<dbReference type="EMBL" id="AL133050">
    <property type="protein sequence ID" value="CAB61377.1"/>
    <property type="status" value="ALT_SEQ"/>
    <property type="molecule type" value="mRNA"/>
</dbReference>
<dbReference type="CCDS" id="CCDS45847.1">
    <molecule id="Q9C0F0-1"/>
</dbReference>
<dbReference type="PIR" id="T42653">
    <property type="entry name" value="T42653"/>
</dbReference>
<dbReference type="RefSeq" id="NP_085135.1">
    <molecule id="Q9C0F0-1"/>
    <property type="nucleotide sequence ID" value="NM_030632.3"/>
</dbReference>
<dbReference type="SMR" id="Q9C0F0"/>
<dbReference type="BioGRID" id="123314">
    <property type="interactions" value="162"/>
</dbReference>
<dbReference type="FunCoup" id="Q9C0F0">
    <property type="interactions" value="91"/>
</dbReference>
<dbReference type="IntAct" id="Q9C0F0">
    <property type="interactions" value="4"/>
</dbReference>
<dbReference type="MINT" id="Q9C0F0"/>
<dbReference type="STRING" id="9606.ENSP00000269197"/>
<dbReference type="GlyGen" id="Q9C0F0">
    <property type="glycosylation" value="12 sites, 1 O-linked glycan (11 sites)"/>
</dbReference>
<dbReference type="iPTMnet" id="Q9C0F0"/>
<dbReference type="PhosphoSitePlus" id="Q9C0F0"/>
<dbReference type="BioMuta" id="ASXL3"/>
<dbReference type="DMDM" id="172046234"/>
<dbReference type="jPOST" id="Q9C0F0"/>
<dbReference type="MassIVE" id="Q9C0F0"/>
<dbReference type="PaxDb" id="9606-ENSP00000269197"/>
<dbReference type="PeptideAtlas" id="Q9C0F0"/>
<dbReference type="ProteomicsDB" id="80026">
    <molecule id="Q9C0F0-1"/>
</dbReference>
<dbReference type="ProteomicsDB" id="80027">
    <molecule id="Q9C0F0-2"/>
</dbReference>
<dbReference type="ABCD" id="Q9C0F0">
    <property type="antibodies" value="9 sequenced antibodies"/>
</dbReference>
<dbReference type="Antibodypedia" id="82041">
    <property type="antibodies" value="8 antibodies from 2 providers"/>
</dbReference>
<dbReference type="DNASU" id="80816"/>
<dbReference type="Ensembl" id="ENST00000269197.12">
    <molecule id="Q9C0F0-1"/>
    <property type="protein sequence ID" value="ENSP00000269197.4"/>
    <property type="gene ID" value="ENSG00000141431.14"/>
</dbReference>
<dbReference type="GeneID" id="80816"/>
<dbReference type="KEGG" id="hsa:80816"/>
<dbReference type="MANE-Select" id="ENST00000269197.12">
    <property type="protein sequence ID" value="ENSP00000269197.4"/>
    <property type="RefSeq nucleotide sequence ID" value="NM_030632.3"/>
    <property type="RefSeq protein sequence ID" value="NP_085135.1"/>
</dbReference>
<dbReference type="UCSC" id="uc010dmg.2">
    <molecule id="Q9C0F0-1"/>
    <property type="organism name" value="human"/>
</dbReference>
<dbReference type="AGR" id="HGNC:29357"/>
<dbReference type="CTD" id="80816"/>
<dbReference type="DisGeNET" id="80816"/>
<dbReference type="GeneCards" id="ASXL3"/>
<dbReference type="GeneReviews" id="ASXL3"/>
<dbReference type="HGNC" id="HGNC:29357">
    <property type="gene designation" value="ASXL3"/>
</dbReference>
<dbReference type="HPA" id="ENSG00000141431">
    <property type="expression patterns" value="Low tissue specificity"/>
</dbReference>
<dbReference type="MalaCards" id="ASXL3"/>
<dbReference type="MIM" id="615115">
    <property type="type" value="gene"/>
</dbReference>
<dbReference type="MIM" id="615485">
    <property type="type" value="phenotype"/>
</dbReference>
<dbReference type="neXtProt" id="NX_Q9C0F0"/>
<dbReference type="OpenTargets" id="ENSG00000141431"/>
<dbReference type="Orphanet" id="352577">
    <property type="disease" value="Bainbridge-Ropers syndrome"/>
</dbReference>
<dbReference type="PharmGKB" id="PA162377010"/>
<dbReference type="VEuPathDB" id="HostDB:ENSG00000141431"/>
<dbReference type="eggNOG" id="ENOG502QWPH">
    <property type="taxonomic scope" value="Eukaryota"/>
</dbReference>
<dbReference type="GeneTree" id="ENSGT00520000055578"/>
<dbReference type="HOGENOM" id="CLU_001823_0_0_1"/>
<dbReference type="InParanoid" id="Q9C0F0"/>
<dbReference type="OMA" id="IQPMACP"/>
<dbReference type="OrthoDB" id="9348951at2759"/>
<dbReference type="PAN-GO" id="Q9C0F0">
    <property type="GO annotations" value="5 GO annotations based on evolutionary models"/>
</dbReference>
<dbReference type="PhylomeDB" id="Q9C0F0"/>
<dbReference type="TreeFam" id="TF328464"/>
<dbReference type="PathwayCommons" id="Q9C0F0"/>
<dbReference type="SignaLink" id="Q9C0F0"/>
<dbReference type="SIGNOR" id="Q9C0F0"/>
<dbReference type="BioGRID-ORCS" id="80816">
    <property type="hits" value="11 hits in 1143 CRISPR screens"/>
</dbReference>
<dbReference type="ChiTaRS" id="ASXL3">
    <property type="organism name" value="human"/>
</dbReference>
<dbReference type="GenomeRNAi" id="80816"/>
<dbReference type="Pharos" id="Q9C0F0">
    <property type="development level" value="Tbio"/>
</dbReference>
<dbReference type="PRO" id="PR:Q9C0F0"/>
<dbReference type="Proteomes" id="UP000005640">
    <property type="component" value="Chromosome 18"/>
</dbReference>
<dbReference type="RNAct" id="Q9C0F0">
    <property type="molecule type" value="protein"/>
</dbReference>
<dbReference type="Bgee" id="ENSG00000141431">
    <property type="expression patterns" value="Expressed in buccal mucosa cell and 139 other cell types or tissues"/>
</dbReference>
<dbReference type="ExpressionAtlas" id="Q9C0F0">
    <property type="expression patterns" value="baseline and differential"/>
</dbReference>
<dbReference type="GO" id="GO:0035517">
    <property type="term" value="C:PR-DUB complex"/>
    <property type="evidence" value="ECO:0000318"/>
    <property type="project" value="GO_Central"/>
</dbReference>
<dbReference type="GO" id="GO:0003682">
    <property type="term" value="F:chromatin binding"/>
    <property type="evidence" value="ECO:0000318"/>
    <property type="project" value="GO_Central"/>
</dbReference>
<dbReference type="GO" id="GO:0003677">
    <property type="term" value="F:DNA binding"/>
    <property type="evidence" value="ECO:0007669"/>
    <property type="project" value="InterPro"/>
</dbReference>
<dbReference type="GO" id="GO:0042975">
    <property type="term" value="F:peroxisome proliferator activated receptor binding"/>
    <property type="evidence" value="ECO:0000318"/>
    <property type="project" value="GO_Central"/>
</dbReference>
<dbReference type="GO" id="GO:0008270">
    <property type="term" value="F:zinc ion binding"/>
    <property type="evidence" value="ECO:0007669"/>
    <property type="project" value="UniProtKB-KW"/>
</dbReference>
<dbReference type="GO" id="GO:0009887">
    <property type="term" value="P:animal organ morphogenesis"/>
    <property type="evidence" value="ECO:0000318"/>
    <property type="project" value="GO_Central"/>
</dbReference>
<dbReference type="GO" id="GO:0051055">
    <property type="term" value="P:negative regulation of lipid biosynthetic process"/>
    <property type="evidence" value="ECO:0000314"/>
    <property type="project" value="CACAO"/>
</dbReference>
<dbReference type="GO" id="GO:0045944">
    <property type="term" value="P:positive regulation of transcription by RNA polymerase II"/>
    <property type="evidence" value="ECO:0000318"/>
    <property type="project" value="GO_Central"/>
</dbReference>
<dbReference type="InterPro" id="IPR026905">
    <property type="entry name" value="ASX-like_PHD"/>
</dbReference>
<dbReference type="InterPro" id="IPR024811">
    <property type="entry name" value="ASX/ASX-like"/>
</dbReference>
<dbReference type="InterPro" id="IPR028020">
    <property type="entry name" value="ASX_DEUBAD_dom"/>
</dbReference>
<dbReference type="InterPro" id="IPR007759">
    <property type="entry name" value="Asxl_HARE-HTH"/>
</dbReference>
<dbReference type="InterPro" id="IPR044867">
    <property type="entry name" value="DEUBAD_dom"/>
</dbReference>
<dbReference type="PANTHER" id="PTHR13578">
    <property type="entry name" value="ADDITIONAL SEX COMBS LIKE PROTEIN ASXL"/>
    <property type="match status" value="1"/>
</dbReference>
<dbReference type="PANTHER" id="PTHR13578:SF18">
    <property type="entry name" value="POLYCOMB GROUP PROTEIN ASXL3-RELATED"/>
    <property type="match status" value="1"/>
</dbReference>
<dbReference type="Pfam" id="PF13919">
    <property type="entry name" value="ASXH"/>
    <property type="match status" value="1"/>
</dbReference>
<dbReference type="Pfam" id="PF05066">
    <property type="entry name" value="HARE-HTH"/>
    <property type="match status" value="1"/>
</dbReference>
<dbReference type="Pfam" id="PF13922">
    <property type="entry name" value="PHD_3"/>
    <property type="match status" value="1"/>
</dbReference>
<dbReference type="PROSITE" id="PS51916">
    <property type="entry name" value="DEUBAD"/>
    <property type="match status" value="1"/>
</dbReference>
<dbReference type="PROSITE" id="PS51913">
    <property type="entry name" value="HTH_HARE"/>
    <property type="match status" value="1"/>
</dbReference>